<reference key="1">
    <citation type="journal article" date="1997" name="Science">
        <title>The complete genome sequence of Escherichia coli K-12.</title>
        <authorList>
            <person name="Blattner F.R."/>
            <person name="Plunkett G. III"/>
            <person name="Bloch C.A."/>
            <person name="Perna N.T."/>
            <person name="Burland V."/>
            <person name="Riley M."/>
            <person name="Collado-Vides J."/>
            <person name="Glasner J.D."/>
            <person name="Rode C.K."/>
            <person name="Mayhew G.F."/>
            <person name="Gregor J."/>
            <person name="Davis N.W."/>
            <person name="Kirkpatrick H.A."/>
            <person name="Goeden M.A."/>
            <person name="Rose D.J."/>
            <person name="Mau B."/>
            <person name="Shao Y."/>
        </authorList>
    </citation>
    <scope>NUCLEOTIDE SEQUENCE [LARGE SCALE GENOMIC DNA]</scope>
    <source>
        <strain>K12 / MG1655 / ATCC 47076</strain>
    </source>
</reference>
<reference key="2">
    <citation type="journal article" date="2006" name="Mol. Syst. Biol.">
        <title>Highly accurate genome sequences of Escherichia coli K-12 strains MG1655 and W3110.</title>
        <authorList>
            <person name="Hayashi K."/>
            <person name="Morooka N."/>
            <person name="Yamamoto Y."/>
            <person name="Fujita K."/>
            <person name="Isono K."/>
            <person name="Choi S."/>
            <person name="Ohtsubo E."/>
            <person name="Baba T."/>
            <person name="Wanner B.L."/>
            <person name="Mori H."/>
            <person name="Horiuchi T."/>
        </authorList>
    </citation>
    <scope>NUCLEOTIDE SEQUENCE [LARGE SCALE GENOMIC DNA]</scope>
    <source>
        <strain>K12 / W3110 / ATCC 27325 / DSM 5911</strain>
    </source>
</reference>
<reference key="3">
    <citation type="journal article" date="2008" name="Mol. Microbiol.">
        <title>Small membrane proteins found by comparative genomics and ribosome binding site models.</title>
        <authorList>
            <person name="Hemm M.R."/>
            <person name="Paul B.J."/>
            <person name="Schneider T.D."/>
            <person name="Storz G."/>
            <person name="Rudd K.E."/>
        </authorList>
    </citation>
    <scope>IDENTIFICATION</scope>
    <scope>INDUCTION</scope>
    <source>
        <strain>K12 / MG1655 / ATCC 47076</strain>
    </source>
</reference>
<reference key="4">
    <citation type="journal article" date="2010" name="J. Bacteriol.">
        <title>Small stress response proteins in Escherichia coli: proteins missed by classical proteomic studies.</title>
        <authorList>
            <person name="Hemm M.R."/>
            <person name="Paul B.J."/>
            <person name="Miranda-Rios J."/>
            <person name="Zhang A."/>
            <person name="Soltanzad N."/>
            <person name="Storz G."/>
        </authorList>
    </citation>
    <scope>INDUCTION</scope>
    <source>
        <strain>K12 / MG1655 / ATCC 47076</strain>
    </source>
</reference>
<evidence type="ECO:0000269" key="1">
    <source>
    </source>
</evidence>
<evidence type="ECO:0000269" key="2">
    <source>
    </source>
</evidence>
<keyword id="KW-1185">Reference proteome</keyword>
<keyword id="KW-0346">Stress response</keyword>
<accession>C1P619</accession>
<proteinExistence type="evidence at protein level"/>
<gene>
    <name type="primary">ilvX</name>
    <name type="ordered locus">b4669</name>
    <name type="ordered locus">JW3740.1</name>
</gene>
<organism>
    <name type="scientific">Escherichia coli (strain K12)</name>
    <dbReference type="NCBI Taxonomy" id="83333"/>
    <lineage>
        <taxon>Bacteria</taxon>
        <taxon>Pseudomonadati</taxon>
        <taxon>Pseudomonadota</taxon>
        <taxon>Gammaproteobacteria</taxon>
        <taxon>Enterobacterales</taxon>
        <taxon>Enterobacteriaceae</taxon>
        <taxon>Escherichia</taxon>
    </lineage>
</organism>
<name>ILVX_ECOLI</name>
<comment type="induction">
    <text evidence="1 2">In stationary phase (PubMed:19121005) and in minimal glucose or glycerol medium (PubMed:19734316) (at protein level).</text>
</comment>
<dbReference type="EMBL" id="U00096">
    <property type="protein sequence ID" value="ACO60011.1"/>
    <property type="molecule type" value="Genomic_DNA"/>
</dbReference>
<dbReference type="EMBL" id="AP009048">
    <property type="status" value="NOT_ANNOTATED_CDS"/>
    <property type="molecule type" value="Genomic_DNA"/>
</dbReference>
<dbReference type="RefSeq" id="WP_001387183.1">
    <property type="nucleotide sequence ID" value="NZ_STEB01000021.1"/>
</dbReference>
<dbReference type="RefSeq" id="YP_002791259.1">
    <property type="nucleotide sequence ID" value="NC_000913.3"/>
</dbReference>
<dbReference type="FunCoup" id="C1P619">
    <property type="interactions" value="1"/>
</dbReference>
<dbReference type="STRING" id="511145.b4669"/>
<dbReference type="EnsemblBacteria" id="ACO60011">
    <property type="protein sequence ID" value="ACO60011"/>
    <property type="gene ID" value="b4669"/>
</dbReference>
<dbReference type="GeneID" id="7751639"/>
<dbReference type="GeneID" id="93778178"/>
<dbReference type="KEGG" id="eco:b4669"/>
<dbReference type="InParanoid" id="C1P619"/>
<dbReference type="BioCyc" id="EcoCyc:MONOMER0-2868"/>
<dbReference type="PRO" id="PR:C1P619"/>
<dbReference type="Proteomes" id="UP000000625">
    <property type="component" value="Chromosome"/>
</dbReference>
<dbReference type="NCBIfam" id="NF038286">
    <property type="entry name" value="peptide_16_IlvX"/>
    <property type="match status" value="1"/>
</dbReference>
<protein>
    <recommendedName>
        <fullName>Uncharacterized protein IlvX</fullName>
    </recommendedName>
</protein>
<feature type="chain" id="PRO_0000381977" description="Uncharacterized protein IlvX">
    <location>
        <begin position="1"/>
        <end position="16"/>
    </location>
</feature>
<sequence>MNNSTKFCFSRFRTGN</sequence>